<name>RIR2_PLAF4</name>
<proteinExistence type="evidence at transcript level"/>
<accession>P50650</accession>
<comment type="function">
    <text>Provides the precursors necessary for DNA synthesis. Catalyzes the biosynthesis of deoxyribonucleotides from the corresponding ribonucleotides.</text>
</comment>
<comment type="catalytic activity">
    <reaction evidence="2">
        <text>a 2'-deoxyribonucleoside 5'-diphosphate + [thioredoxin]-disulfide + H2O = a ribonucleoside 5'-diphosphate + [thioredoxin]-dithiol</text>
        <dbReference type="Rhea" id="RHEA:23252"/>
        <dbReference type="Rhea" id="RHEA-COMP:10698"/>
        <dbReference type="Rhea" id="RHEA-COMP:10700"/>
        <dbReference type="ChEBI" id="CHEBI:15377"/>
        <dbReference type="ChEBI" id="CHEBI:29950"/>
        <dbReference type="ChEBI" id="CHEBI:50058"/>
        <dbReference type="ChEBI" id="CHEBI:57930"/>
        <dbReference type="ChEBI" id="CHEBI:73316"/>
        <dbReference type="EC" id="1.17.4.1"/>
    </reaction>
</comment>
<comment type="cofactor">
    <cofactor evidence="1">
        <name>Fe cation</name>
        <dbReference type="ChEBI" id="CHEBI:24875"/>
    </cofactor>
    <text evidence="1">Binds 2 iron ions per subunit.</text>
</comment>
<comment type="subunit">
    <text>Heterodimer of a large and a small subunit.</text>
</comment>
<comment type="similarity">
    <text evidence="3">Belongs to the ribonucleoside diphosphate reductase small chain family.</text>
</comment>
<sequence length="349" mass="40595">MADVINISRIPIFSKQEREFSDLQKGKEINEKILNKESDRFTLYPILYPDVWDFYKKAEASFWTAEEIDLSSDLKDFEKLNENEKHFIKHVLAFFAASDGIVLENLASKFLREVQITEAKKFYSFQIAVENIHSETYSLLIDNYIKDEKERLNLFHAIENIPAVKNKALWAAKWINDTNSFAERIVANACVEGILFSGSFCAIFWFKKQNKLHGLTFSNELISRDEGLHTDFNCLIYSLLDNKLPEQIIQNIVKEAVEVERSFICESLPCDLIGMNSRLMSQYIEFVADRLLECLGCSKIFHSKNPFNWMDLISLQGKTNFFEKRVADYQKSGVMAQRKDQVFCLNTEF</sequence>
<dbReference type="EC" id="1.17.4.1"/>
<dbReference type="EMBL" id="U01322">
    <property type="protein sequence ID" value="AAA50170.1"/>
    <property type="molecule type" value="mRNA"/>
</dbReference>
<dbReference type="PIR" id="B49412">
    <property type="entry name" value="B49412"/>
</dbReference>
<dbReference type="SMR" id="P50650"/>
<dbReference type="GO" id="GO:0046872">
    <property type="term" value="F:metal ion binding"/>
    <property type="evidence" value="ECO:0007669"/>
    <property type="project" value="UniProtKB-KW"/>
</dbReference>
<dbReference type="GO" id="GO:0004748">
    <property type="term" value="F:ribonucleoside-diphosphate reductase activity, thioredoxin disulfide as acceptor"/>
    <property type="evidence" value="ECO:0007669"/>
    <property type="project" value="UniProtKB-EC"/>
</dbReference>
<dbReference type="GO" id="GO:0009263">
    <property type="term" value="P:deoxyribonucleotide biosynthetic process"/>
    <property type="evidence" value="ECO:0007669"/>
    <property type="project" value="UniProtKB-KW"/>
</dbReference>
<dbReference type="CDD" id="cd01049">
    <property type="entry name" value="RNRR2"/>
    <property type="match status" value="1"/>
</dbReference>
<dbReference type="Gene3D" id="1.10.620.20">
    <property type="entry name" value="Ribonucleotide Reductase, subunit A"/>
    <property type="match status" value="1"/>
</dbReference>
<dbReference type="InterPro" id="IPR009078">
    <property type="entry name" value="Ferritin-like_SF"/>
</dbReference>
<dbReference type="InterPro" id="IPR012348">
    <property type="entry name" value="RNR-like"/>
</dbReference>
<dbReference type="InterPro" id="IPR033909">
    <property type="entry name" value="RNR_small"/>
</dbReference>
<dbReference type="InterPro" id="IPR030475">
    <property type="entry name" value="RNR_small_AS"/>
</dbReference>
<dbReference type="InterPro" id="IPR000358">
    <property type="entry name" value="RNR_small_fam"/>
</dbReference>
<dbReference type="PANTHER" id="PTHR23409">
    <property type="entry name" value="RIBONUCLEOSIDE-DIPHOSPHATE REDUCTASE SMALL CHAIN"/>
    <property type="match status" value="1"/>
</dbReference>
<dbReference type="PANTHER" id="PTHR23409:SF18">
    <property type="entry name" value="RIBONUCLEOSIDE-DIPHOSPHATE REDUCTASE SUBUNIT M2"/>
    <property type="match status" value="1"/>
</dbReference>
<dbReference type="Pfam" id="PF00268">
    <property type="entry name" value="Ribonuc_red_sm"/>
    <property type="match status" value="1"/>
</dbReference>
<dbReference type="SUPFAM" id="SSF47240">
    <property type="entry name" value="Ferritin-like"/>
    <property type="match status" value="1"/>
</dbReference>
<dbReference type="PROSITE" id="PS00368">
    <property type="entry name" value="RIBORED_SMALL"/>
    <property type="match status" value="1"/>
</dbReference>
<evidence type="ECO:0000250" key="1"/>
<evidence type="ECO:0000255" key="2">
    <source>
        <dbReference type="PROSITE-ProRule" id="PRU10014"/>
    </source>
</evidence>
<evidence type="ECO:0000305" key="3"/>
<feature type="chain" id="PRO_0000190459" description="Ribonucleoside-diphosphate reductase small chain">
    <location>
        <begin position="1"/>
        <end position="349"/>
    </location>
</feature>
<feature type="active site" evidence="2">
    <location>
        <position position="137"/>
    </location>
</feature>
<feature type="binding site" evidence="2">
    <location>
        <position position="99"/>
    </location>
    <ligand>
        <name>Fe cation</name>
        <dbReference type="ChEBI" id="CHEBI:24875"/>
        <label>1</label>
    </ligand>
</feature>
<feature type="binding site" evidence="2">
    <location>
        <position position="130"/>
    </location>
    <ligand>
        <name>Fe cation</name>
        <dbReference type="ChEBI" id="CHEBI:24875"/>
        <label>1</label>
    </ligand>
</feature>
<feature type="binding site" evidence="1">
    <location>
        <position position="130"/>
    </location>
    <ligand>
        <name>Fe cation</name>
        <dbReference type="ChEBI" id="CHEBI:24875"/>
        <label>2</label>
    </ligand>
</feature>
<feature type="binding site" evidence="2">
    <location>
        <position position="133"/>
    </location>
    <ligand>
        <name>Fe cation</name>
        <dbReference type="ChEBI" id="CHEBI:24875"/>
        <label>1</label>
    </ligand>
</feature>
<feature type="binding site" evidence="1">
    <location>
        <position position="192"/>
    </location>
    <ligand>
        <name>Fe cation</name>
        <dbReference type="ChEBI" id="CHEBI:24875"/>
        <label>2</label>
    </ligand>
</feature>
<feature type="binding site" evidence="1">
    <location>
        <position position="226"/>
    </location>
    <ligand>
        <name>Fe cation</name>
        <dbReference type="ChEBI" id="CHEBI:24875"/>
        <label>2</label>
    </ligand>
</feature>
<feature type="binding site" evidence="1">
    <location>
        <position position="229"/>
    </location>
    <ligand>
        <name>Fe cation</name>
        <dbReference type="ChEBI" id="CHEBI:24875"/>
        <label>2</label>
    </ligand>
</feature>
<protein>
    <recommendedName>
        <fullName>Ribonucleoside-diphosphate reductase small chain</fullName>
        <ecNumber>1.17.4.1</ecNumber>
    </recommendedName>
    <alternativeName>
        <fullName>Ribonucleotide reductase R2 subunit</fullName>
    </alternativeName>
    <alternativeName>
        <fullName>Ribonucleotide reductase small subunit</fullName>
    </alternativeName>
</protein>
<gene>
    <name type="primary">RNR2</name>
</gene>
<reference key="1">
    <citation type="journal article" date="1993" name="Proc. Natl. Acad. Sci. U.S.A.">
        <title>Cloning and characterization of subunit genes of ribonucleotide reductase, a cell-cycle-regulated enzyme, from Plasmodium falciparum.</title>
        <authorList>
            <person name="Chakrabarti D."/>
            <person name="Schuster S.M."/>
            <person name="Chakrabarti R."/>
        </authorList>
    </citation>
    <scope>NUCLEOTIDE SEQUENCE [MRNA]</scope>
</reference>
<keyword id="KW-0215">Deoxyribonucleotide synthesis</keyword>
<keyword id="KW-0408">Iron</keyword>
<keyword id="KW-0479">Metal-binding</keyword>
<keyword id="KW-0560">Oxidoreductase</keyword>
<organism>
    <name type="scientific">Plasmodium falciparum (isolate Dd2)</name>
    <dbReference type="NCBI Taxonomy" id="57267"/>
    <lineage>
        <taxon>Eukaryota</taxon>
        <taxon>Sar</taxon>
        <taxon>Alveolata</taxon>
        <taxon>Apicomplexa</taxon>
        <taxon>Aconoidasida</taxon>
        <taxon>Haemosporida</taxon>
        <taxon>Plasmodiidae</taxon>
        <taxon>Plasmodium</taxon>
        <taxon>Plasmodium (Laverania)</taxon>
    </lineage>
</organism>